<comment type="similarity">
    <text evidence="1">Belongs to the bacterial ribosomal protein bS16 family.</text>
</comment>
<sequence>MVTIRLARGGSKKRPFYHLTVTNSRNARDGRFVERVGFFNPIASGAEVKLSVNQERVTYWLSQGAQPSERVAQLLKEAAKAAA</sequence>
<feature type="chain" id="PRO_1000049321" description="Small ribosomal subunit protein bS16">
    <location>
        <begin position="1"/>
        <end position="83"/>
    </location>
</feature>
<dbReference type="EMBL" id="CT573326">
    <property type="protein sequence ID" value="CAK16947.1"/>
    <property type="molecule type" value="Genomic_DNA"/>
</dbReference>
<dbReference type="RefSeq" id="WP_011535318.1">
    <property type="nucleotide sequence ID" value="NC_008027.1"/>
</dbReference>
<dbReference type="SMR" id="Q1I5Y8"/>
<dbReference type="STRING" id="384676.PSEEN4260"/>
<dbReference type="GeneID" id="93679514"/>
<dbReference type="KEGG" id="pen:PSEEN4260"/>
<dbReference type="eggNOG" id="COG0228">
    <property type="taxonomic scope" value="Bacteria"/>
</dbReference>
<dbReference type="HOGENOM" id="CLU_100590_5_1_6"/>
<dbReference type="OrthoDB" id="9807878at2"/>
<dbReference type="Proteomes" id="UP000000658">
    <property type="component" value="Chromosome"/>
</dbReference>
<dbReference type="GO" id="GO:0005737">
    <property type="term" value="C:cytoplasm"/>
    <property type="evidence" value="ECO:0007669"/>
    <property type="project" value="UniProtKB-ARBA"/>
</dbReference>
<dbReference type="GO" id="GO:0015935">
    <property type="term" value="C:small ribosomal subunit"/>
    <property type="evidence" value="ECO:0007669"/>
    <property type="project" value="TreeGrafter"/>
</dbReference>
<dbReference type="GO" id="GO:0003735">
    <property type="term" value="F:structural constituent of ribosome"/>
    <property type="evidence" value="ECO:0007669"/>
    <property type="project" value="InterPro"/>
</dbReference>
<dbReference type="GO" id="GO:0006412">
    <property type="term" value="P:translation"/>
    <property type="evidence" value="ECO:0007669"/>
    <property type="project" value="UniProtKB-UniRule"/>
</dbReference>
<dbReference type="FunFam" id="3.30.1320.10:FF:000001">
    <property type="entry name" value="30S ribosomal protein S16"/>
    <property type="match status" value="1"/>
</dbReference>
<dbReference type="Gene3D" id="3.30.1320.10">
    <property type="match status" value="1"/>
</dbReference>
<dbReference type="HAMAP" id="MF_00385">
    <property type="entry name" value="Ribosomal_bS16"/>
    <property type="match status" value="1"/>
</dbReference>
<dbReference type="InterPro" id="IPR000307">
    <property type="entry name" value="Ribosomal_bS16"/>
</dbReference>
<dbReference type="InterPro" id="IPR023803">
    <property type="entry name" value="Ribosomal_bS16_dom_sf"/>
</dbReference>
<dbReference type="NCBIfam" id="TIGR00002">
    <property type="entry name" value="S16"/>
    <property type="match status" value="1"/>
</dbReference>
<dbReference type="PANTHER" id="PTHR12919">
    <property type="entry name" value="30S RIBOSOMAL PROTEIN S16"/>
    <property type="match status" value="1"/>
</dbReference>
<dbReference type="PANTHER" id="PTHR12919:SF20">
    <property type="entry name" value="SMALL RIBOSOMAL SUBUNIT PROTEIN BS16M"/>
    <property type="match status" value="1"/>
</dbReference>
<dbReference type="Pfam" id="PF00886">
    <property type="entry name" value="Ribosomal_S16"/>
    <property type="match status" value="1"/>
</dbReference>
<dbReference type="SUPFAM" id="SSF54565">
    <property type="entry name" value="Ribosomal protein S16"/>
    <property type="match status" value="1"/>
</dbReference>
<reference key="1">
    <citation type="journal article" date="2006" name="Nat. Biotechnol.">
        <title>Complete genome sequence of the entomopathogenic and metabolically versatile soil bacterium Pseudomonas entomophila.</title>
        <authorList>
            <person name="Vodovar N."/>
            <person name="Vallenet D."/>
            <person name="Cruveiller S."/>
            <person name="Rouy Z."/>
            <person name="Barbe V."/>
            <person name="Acosta C."/>
            <person name="Cattolico L."/>
            <person name="Jubin C."/>
            <person name="Lajus A."/>
            <person name="Segurens B."/>
            <person name="Vacherie B."/>
            <person name="Wincker P."/>
            <person name="Weissenbach J."/>
            <person name="Lemaitre B."/>
            <person name="Medigue C."/>
            <person name="Boccard F."/>
        </authorList>
    </citation>
    <scope>NUCLEOTIDE SEQUENCE [LARGE SCALE GENOMIC DNA]</scope>
    <source>
        <strain>L48</strain>
    </source>
</reference>
<evidence type="ECO:0000255" key="1">
    <source>
        <dbReference type="HAMAP-Rule" id="MF_00385"/>
    </source>
</evidence>
<evidence type="ECO:0000305" key="2"/>
<accession>Q1I5Y8</accession>
<keyword id="KW-0687">Ribonucleoprotein</keyword>
<keyword id="KW-0689">Ribosomal protein</keyword>
<protein>
    <recommendedName>
        <fullName evidence="1">Small ribosomal subunit protein bS16</fullName>
    </recommendedName>
    <alternativeName>
        <fullName evidence="2">30S ribosomal protein S16</fullName>
    </alternativeName>
</protein>
<organism>
    <name type="scientific">Pseudomonas entomophila (strain L48)</name>
    <dbReference type="NCBI Taxonomy" id="384676"/>
    <lineage>
        <taxon>Bacteria</taxon>
        <taxon>Pseudomonadati</taxon>
        <taxon>Pseudomonadota</taxon>
        <taxon>Gammaproteobacteria</taxon>
        <taxon>Pseudomonadales</taxon>
        <taxon>Pseudomonadaceae</taxon>
        <taxon>Pseudomonas</taxon>
    </lineage>
</organism>
<proteinExistence type="inferred from homology"/>
<name>RS16_PSEE4</name>
<gene>
    <name evidence="1" type="primary">rpsP</name>
    <name type="ordered locus">PSEEN4260</name>
</gene>